<feature type="chain" id="PRO_1000064063" description="2,3-bisphosphoglycerate-dependent phosphoglycerate mutase">
    <location>
        <begin position="1"/>
        <end position="227"/>
    </location>
</feature>
<feature type="active site" description="Tele-phosphohistidine intermediate" evidence="1">
    <location>
        <position position="8"/>
    </location>
</feature>
<feature type="active site" description="Proton donor/acceptor" evidence="1">
    <location>
        <position position="86"/>
    </location>
</feature>
<feature type="binding site" evidence="1">
    <location>
        <begin position="7"/>
        <end position="14"/>
    </location>
    <ligand>
        <name>substrate</name>
    </ligand>
</feature>
<feature type="binding site" evidence="1">
    <location>
        <begin position="20"/>
        <end position="21"/>
    </location>
    <ligand>
        <name>substrate</name>
    </ligand>
</feature>
<feature type="binding site" evidence="1">
    <location>
        <position position="59"/>
    </location>
    <ligand>
        <name>substrate</name>
    </ligand>
</feature>
<feature type="binding site" evidence="1">
    <location>
        <begin position="86"/>
        <end position="89"/>
    </location>
    <ligand>
        <name>substrate</name>
    </ligand>
</feature>
<feature type="binding site" evidence="1">
    <location>
        <position position="97"/>
    </location>
    <ligand>
        <name>substrate</name>
    </ligand>
</feature>
<feature type="binding site" evidence="1">
    <location>
        <begin position="113"/>
        <end position="114"/>
    </location>
    <ligand>
        <name>substrate</name>
    </ligand>
</feature>
<feature type="binding site" evidence="1">
    <location>
        <begin position="182"/>
        <end position="183"/>
    </location>
    <ligand>
        <name>substrate</name>
    </ligand>
</feature>
<feature type="site" description="Transition state stabilizer" evidence="1">
    <location>
        <position position="181"/>
    </location>
</feature>
<dbReference type="EC" id="5.4.2.11" evidence="1"/>
<dbReference type="EMBL" id="CP000672">
    <property type="protein sequence ID" value="ABR00317.1"/>
    <property type="molecule type" value="Genomic_DNA"/>
</dbReference>
<dbReference type="SMR" id="A5UHR1"/>
<dbReference type="KEGG" id="hiq:CGSHiGG_07280"/>
<dbReference type="HOGENOM" id="CLU_033323_1_5_6"/>
<dbReference type="UniPathway" id="UPA00109">
    <property type="reaction ID" value="UER00186"/>
</dbReference>
<dbReference type="Proteomes" id="UP000001990">
    <property type="component" value="Chromosome"/>
</dbReference>
<dbReference type="GO" id="GO:0004619">
    <property type="term" value="F:phosphoglycerate mutase activity"/>
    <property type="evidence" value="ECO:0007669"/>
    <property type="project" value="UniProtKB-EC"/>
</dbReference>
<dbReference type="GO" id="GO:0006094">
    <property type="term" value="P:gluconeogenesis"/>
    <property type="evidence" value="ECO:0007669"/>
    <property type="project" value="UniProtKB-UniRule"/>
</dbReference>
<dbReference type="GO" id="GO:0006096">
    <property type="term" value="P:glycolytic process"/>
    <property type="evidence" value="ECO:0007669"/>
    <property type="project" value="UniProtKB-UniRule"/>
</dbReference>
<dbReference type="CDD" id="cd07067">
    <property type="entry name" value="HP_PGM_like"/>
    <property type="match status" value="1"/>
</dbReference>
<dbReference type="FunFam" id="3.40.50.1240:FF:000003">
    <property type="entry name" value="2,3-bisphosphoglycerate-dependent phosphoglycerate mutase"/>
    <property type="match status" value="1"/>
</dbReference>
<dbReference type="Gene3D" id="3.40.50.1240">
    <property type="entry name" value="Phosphoglycerate mutase-like"/>
    <property type="match status" value="1"/>
</dbReference>
<dbReference type="HAMAP" id="MF_01039">
    <property type="entry name" value="PGAM_GpmA"/>
    <property type="match status" value="1"/>
</dbReference>
<dbReference type="InterPro" id="IPR013078">
    <property type="entry name" value="His_Pase_superF_clade-1"/>
</dbReference>
<dbReference type="InterPro" id="IPR029033">
    <property type="entry name" value="His_PPase_superfam"/>
</dbReference>
<dbReference type="InterPro" id="IPR005952">
    <property type="entry name" value="Phosphogly_mut1"/>
</dbReference>
<dbReference type="NCBIfam" id="TIGR01258">
    <property type="entry name" value="pgm_1"/>
    <property type="match status" value="1"/>
</dbReference>
<dbReference type="NCBIfam" id="NF010713">
    <property type="entry name" value="PRK14115.1"/>
    <property type="match status" value="1"/>
</dbReference>
<dbReference type="NCBIfam" id="NF010716">
    <property type="entry name" value="PRK14118.1"/>
    <property type="match status" value="1"/>
</dbReference>
<dbReference type="PANTHER" id="PTHR11931">
    <property type="entry name" value="PHOSPHOGLYCERATE MUTASE"/>
    <property type="match status" value="1"/>
</dbReference>
<dbReference type="Pfam" id="PF00300">
    <property type="entry name" value="His_Phos_1"/>
    <property type="match status" value="2"/>
</dbReference>
<dbReference type="PIRSF" id="PIRSF000709">
    <property type="entry name" value="6PFK_2-Ptase"/>
    <property type="match status" value="1"/>
</dbReference>
<dbReference type="SMART" id="SM00855">
    <property type="entry name" value="PGAM"/>
    <property type="match status" value="1"/>
</dbReference>
<dbReference type="SUPFAM" id="SSF53254">
    <property type="entry name" value="Phosphoglycerate mutase-like"/>
    <property type="match status" value="1"/>
</dbReference>
<evidence type="ECO:0000255" key="1">
    <source>
        <dbReference type="HAMAP-Rule" id="MF_01039"/>
    </source>
</evidence>
<gene>
    <name evidence="1" type="primary">gpmA</name>
    <name type="ordered locus">CGSHiGG_07280</name>
</gene>
<reference key="1">
    <citation type="journal article" date="2007" name="Genome Biol.">
        <title>Characterization and modeling of the Haemophilus influenzae core and supragenomes based on the complete genomic sequences of Rd and 12 clinical nontypeable strains.</title>
        <authorList>
            <person name="Hogg J.S."/>
            <person name="Hu F.Z."/>
            <person name="Janto B."/>
            <person name="Boissy R."/>
            <person name="Hayes J."/>
            <person name="Keefe R."/>
            <person name="Post J.C."/>
            <person name="Ehrlich G.D."/>
        </authorList>
    </citation>
    <scope>NUCLEOTIDE SEQUENCE [LARGE SCALE GENOMIC DNA]</scope>
    <source>
        <strain>PittGG</strain>
    </source>
</reference>
<keyword id="KW-0312">Gluconeogenesis</keyword>
<keyword id="KW-0324">Glycolysis</keyword>
<keyword id="KW-0413">Isomerase</keyword>
<organism>
    <name type="scientific">Haemophilus influenzae (strain PittGG)</name>
    <dbReference type="NCBI Taxonomy" id="374931"/>
    <lineage>
        <taxon>Bacteria</taxon>
        <taxon>Pseudomonadati</taxon>
        <taxon>Pseudomonadota</taxon>
        <taxon>Gammaproteobacteria</taxon>
        <taxon>Pasteurellales</taxon>
        <taxon>Pasteurellaceae</taxon>
        <taxon>Haemophilus</taxon>
    </lineage>
</organism>
<comment type="function">
    <text evidence="1">Catalyzes the interconversion of 2-phosphoglycerate and 3-phosphoglycerate.</text>
</comment>
<comment type="catalytic activity">
    <reaction evidence="1">
        <text>(2R)-2-phosphoglycerate = (2R)-3-phosphoglycerate</text>
        <dbReference type="Rhea" id="RHEA:15901"/>
        <dbReference type="ChEBI" id="CHEBI:58272"/>
        <dbReference type="ChEBI" id="CHEBI:58289"/>
        <dbReference type="EC" id="5.4.2.11"/>
    </reaction>
</comment>
<comment type="pathway">
    <text evidence="1">Carbohydrate degradation; glycolysis; pyruvate from D-glyceraldehyde 3-phosphate: step 3/5.</text>
</comment>
<comment type="subunit">
    <text evidence="1">Homodimer.</text>
</comment>
<comment type="similarity">
    <text evidence="1">Belongs to the phosphoglycerate mutase family. BPG-dependent PGAM subfamily.</text>
</comment>
<protein>
    <recommendedName>
        <fullName evidence="1">2,3-bisphosphoglycerate-dependent phosphoglycerate mutase</fullName>
        <shortName evidence="1">BPG-dependent PGAM</shortName>
        <shortName evidence="1">PGAM</shortName>
        <shortName evidence="1">Phosphoglyceromutase</shortName>
        <shortName evidence="1">dPGM</shortName>
        <ecNumber evidence="1">5.4.2.11</ecNumber>
    </recommendedName>
</protein>
<name>GPMA_HAEIG</name>
<sequence>MELVFIRHGFSEWNAKNLFTGWRDVNLTERGVEEAKAAGKKLLDKGYEFDIAFTSVLTRAIKTCNIVLEESHQLWIPQVKNWRLNERHYGALQGLDKKATAEQYGDEQVHIWRRSYDISPPDLDPQDPNSAHNDRRYANIPFDVVPNAENLKLTLERALPFWEDQIAPAMLSGKRVLVVAHGNSLRALAKHIIGISDAEIMDFEIPTGQPLVLKLDDKLNYVEHYYL</sequence>
<proteinExistence type="inferred from homology"/>
<accession>A5UHR1</accession>